<feature type="chain" id="PRO_1000021319" description="Shikimate dehydrogenase (NADP(+))">
    <location>
        <begin position="1"/>
        <end position="272"/>
    </location>
</feature>
<feature type="active site" description="Proton acceptor" evidence="1">
    <location>
        <position position="65"/>
    </location>
</feature>
<feature type="binding site" evidence="1">
    <location>
        <begin position="14"/>
        <end position="16"/>
    </location>
    <ligand>
        <name>shikimate</name>
        <dbReference type="ChEBI" id="CHEBI:36208"/>
    </ligand>
</feature>
<feature type="binding site" evidence="1">
    <location>
        <position position="61"/>
    </location>
    <ligand>
        <name>shikimate</name>
        <dbReference type="ChEBI" id="CHEBI:36208"/>
    </ligand>
</feature>
<feature type="binding site" evidence="1">
    <location>
        <position position="77"/>
    </location>
    <ligand>
        <name>NADP(+)</name>
        <dbReference type="ChEBI" id="CHEBI:58349"/>
    </ligand>
</feature>
<feature type="binding site" evidence="1">
    <location>
        <position position="86"/>
    </location>
    <ligand>
        <name>shikimate</name>
        <dbReference type="ChEBI" id="CHEBI:36208"/>
    </ligand>
</feature>
<feature type="binding site" evidence="1">
    <location>
        <position position="102"/>
    </location>
    <ligand>
        <name>shikimate</name>
        <dbReference type="ChEBI" id="CHEBI:36208"/>
    </ligand>
</feature>
<feature type="binding site" evidence="1">
    <location>
        <begin position="126"/>
        <end position="130"/>
    </location>
    <ligand>
        <name>NADP(+)</name>
        <dbReference type="ChEBI" id="CHEBI:58349"/>
    </ligand>
</feature>
<feature type="binding site" evidence="1">
    <location>
        <begin position="150"/>
        <end position="155"/>
    </location>
    <ligand>
        <name>NADP(+)</name>
        <dbReference type="ChEBI" id="CHEBI:58349"/>
    </ligand>
</feature>
<feature type="binding site" evidence="1">
    <location>
        <position position="213"/>
    </location>
    <ligand>
        <name>NADP(+)</name>
        <dbReference type="ChEBI" id="CHEBI:58349"/>
    </ligand>
</feature>
<feature type="binding site" evidence="1">
    <location>
        <position position="215"/>
    </location>
    <ligand>
        <name>shikimate</name>
        <dbReference type="ChEBI" id="CHEBI:36208"/>
    </ligand>
</feature>
<feature type="binding site" evidence="1">
    <location>
        <position position="237"/>
    </location>
    <ligand>
        <name>NADP(+)</name>
        <dbReference type="ChEBI" id="CHEBI:58349"/>
    </ligand>
</feature>
<sequence length="272" mass="29480">MDNYAVFGNPIKQSKSPFIHTLFAQQTQEKIVYSAIEPATDDFKTALKDFFLEQGKGCNITAPFKEQAYQYAQQLTERAALAGAVNTLKLTDDGIIIGDNTDGAGLVLDLKNNNVTLKGSRILLIGAGGAARGVCGPLLAEHPKELIIANRTFSKAQTLTTIFTKLGNISACEFSELSGEFDLIINSTSASLHGEVPLIGTKLIRPETTIYDMMYSAQVTPFNAWAKEQGAKFILDGLGMLVGQAAESFAIWRGVKPDAKQVLNELRHHLAT</sequence>
<gene>
    <name evidence="1" type="primary">aroE</name>
    <name type="ordered locus">Ping_0071</name>
</gene>
<protein>
    <recommendedName>
        <fullName evidence="1">Shikimate dehydrogenase (NADP(+))</fullName>
        <shortName evidence="1">SDH</shortName>
        <ecNumber evidence="1">1.1.1.25</ecNumber>
    </recommendedName>
</protein>
<comment type="function">
    <text evidence="1">Involved in the biosynthesis of the chorismate, which leads to the biosynthesis of aromatic amino acids. Catalyzes the reversible NADPH linked reduction of 3-dehydroshikimate (DHSA) to yield shikimate (SA).</text>
</comment>
<comment type="catalytic activity">
    <reaction evidence="1">
        <text>shikimate + NADP(+) = 3-dehydroshikimate + NADPH + H(+)</text>
        <dbReference type="Rhea" id="RHEA:17737"/>
        <dbReference type="ChEBI" id="CHEBI:15378"/>
        <dbReference type="ChEBI" id="CHEBI:16630"/>
        <dbReference type="ChEBI" id="CHEBI:36208"/>
        <dbReference type="ChEBI" id="CHEBI:57783"/>
        <dbReference type="ChEBI" id="CHEBI:58349"/>
        <dbReference type="EC" id="1.1.1.25"/>
    </reaction>
</comment>
<comment type="pathway">
    <text evidence="1">Metabolic intermediate biosynthesis; chorismate biosynthesis; chorismate from D-erythrose 4-phosphate and phosphoenolpyruvate: step 4/7.</text>
</comment>
<comment type="subunit">
    <text evidence="1">Homodimer.</text>
</comment>
<comment type="similarity">
    <text evidence="1">Belongs to the shikimate dehydrogenase family.</text>
</comment>
<reference key="1">
    <citation type="journal article" date="2008" name="BMC Genomics">
        <title>Genomics of an extreme psychrophile, Psychromonas ingrahamii.</title>
        <authorList>
            <person name="Riley M."/>
            <person name="Staley J.T."/>
            <person name="Danchin A."/>
            <person name="Wang T.Z."/>
            <person name="Brettin T.S."/>
            <person name="Hauser L.J."/>
            <person name="Land M.L."/>
            <person name="Thompson L.S."/>
        </authorList>
    </citation>
    <scope>NUCLEOTIDE SEQUENCE [LARGE SCALE GENOMIC DNA]</scope>
    <source>
        <strain>DSM 17664 / CCUG 51855 / 37</strain>
    </source>
</reference>
<keyword id="KW-0028">Amino-acid biosynthesis</keyword>
<keyword id="KW-0057">Aromatic amino acid biosynthesis</keyword>
<keyword id="KW-0521">NADP</keyword>
<keyword id="KW-0560">Oxidoreductase</keyword>
<keyword id="KW-1185">Reference proteome</keyword>
<name>AROE_PSYIN</name>
<evidence type="ECO:0000255" key="1">
    <source>
        <dbReference type="HAMAP-Rule" id="MF_00222"/>
    </source>
</evidence>
<organism>
    <name type="scientific">Psychromonas ingrahamii (strain DSM 17664 / CCUG 51855 / 37)</name>
    <dbReference type="NCBI Taxonomy" id="357804"/>
    <lineage>
        <taxon>Bacteria</taxon>
        <taxon>Pseudomonadati</taxon>
        <taxon>Pseudomonadota</taxon>
        <taxon>Gammaproteobacteria</taxon>
        <taxon>Alteromonadales</taxon>
        <taxon>Psychromonadaceae</taxon>
        <taxon>Psychromonas</taxon>
    </lineage>
</organism>
<proteinExistence type="inferred from homology"/>
<accession>A1SR30</accession>
<dbReference type="EC" id="1.1.1.25" evidence="1"/>
<dbReference type="EMBL" id="CP000510">
    <property type="protein sequence ID" value="ABM01945.1"/>
    <property type="molecule type" value="Genomic_DNA"/>
</dbReference>
<dbReference type="RefSeq" id="WP_011768504.1">
    <property type="nucleotide sequence ID" value="NC_008709.1"/>
</dbReference>
<dbReference type="SMR" id="A1SR30"/>
<dbReference type="STRING" id="357804.Ping_0071"/>
<dbReference type="KEGG" id="pin:Ping_0071"/>
<dbReference type="eggNOG" id="COG0169">
    <property type="taxonomic scope" value="Bacteria"/>
</dbReference>
<dbReference type="HOGENOM" id="CLU_044063_2_1_6"/>
<dbReference type="OrthoDB" id="9776868at2"/>
<dbReference type="UniPathway" id="UPA00053">
    <property type="reaction ID" value="UER00087"/>
</dbReference>
<dbReference type="Proteomes" id="UP000000639">
    <property type="component" value="Chromosome"/>
</dbReference>
<dbReference type="GO" id="GO:0005829">
    <property type="term" value="C:cytosol"/>
    <property type="evidence" value="ECO:0007669"/>
    <property type="project" value="TreeGrafter"/>
</dbReference>
<dbReference type="GO" id="GO:0050661">
    <property type="term" value="F:NADP binding"/>
    <property type="evidence" value="ECO:0007669"/>
    <property type="project" value="InterPro"/>
</dbReference>
<dbReference type="GO" id="GO:0004764">
    <property type="term" value="F:shikimate 3-dehydrogenase (NADP+) activity"/>
    <property type="evidence" value="ECO:0007669"/>
    <property type="project" value="UniProtKB-UniRule"/>
</dbReference>
<dbReference type="GO" id="GO:0008652">
    <property type="term" value="P:amino acid biosynthetic process"/>
    <property type="evidence" value="ECO:0007669"/>
    <property type="project" value="UniProtKB-KW"/>
</dbReference>
<dbReference type="GO" id="GO:0009073">
    <property type="term" value="P:aromatic amino acid family biosynthetic process"/>
    <property type="evidence" value="ECO:0007669"/>
    <property type="project" value="UniProtKB-KW"/>
</dbReference>
<dbReference type="GO" id="GO:0009423">
    <property type="term" value="P:chorismate biosynthetic process"/>
    <property type="evidence" value="ECO:0007669"/>
    <property type="project" value="UniProtKB-UniRule"/>
</dbReference>
<dbReference type="GO" id="GO:0019632">
    <property type="term" value="P:shikimate metabolic process"/>
    <property type="evidence" value="ECO:0007669"/>
    <property type="project" value="InterPro"/>
</dbReference>
<dbReference type="CDD" id="cd01065">
    <property type="entry name" value="NAD_bind_Shikimate_DH"/>
    <property type="match status" value="1"/>
</dbReference>
<dbReference type="FunFam" id="3.40.50.10860:FF:000006">
    <property type="entry name" value="Shikimate dehydrogenase (NADP(+))"/>
    <property type="match status" value="1"/>
</dbReference>
<dbReference type="FunFam" id="3.40.50.720:FF:000104">
    <property type="entry name" value="Shikimate dehydrogenase (NADP(+))"/>
    <property type="match status" value="1"/>
</dbReference>
<dbReference type="Gene3D" id="3.40.50.10860">
    <property type="entry name" value="Leucine Dehydrogenase, chain A, domain 1"/>
    <property type="match status" value="1"/>
</dbReference>
<dbReference type="Gene3D" id="3.40.50.720">
    <property type="entry name" value="NAD(P)-binding Rossmann-like Domain"/>
    <property type="match status" value="1"/>
</dbReference>
<dbReference type="HAMAP" id="MF_00222">
    <property type="entry name" value="Shikimate_DH_AroE"/>
    <property type="match status" value="1"/>
</dbReference>
<dbReference type="InterPro" id="IPR046346">
    <property type="entry name" value="Aminoacid_DH-like_N_sf"/>
</dbReference>
<dbReference type="InterPro" id="IPR036291">
    <property type="entry name" value="NAD(P)-bd_dom_sf"/>
</dbReference>
<dbReference type="InterPro" id="IPR041121">
    <property type="entry name" value="SDH_C"/>
</dbReference>
<dbReference type="InterPro" id="IPR011342">
    <property type="entry name" value="Shikimate_DH"/>
</dbReference>
<dbReference type="InterPro" id="IPR013708">
    <property type="entry name" value="Shikimate_DH-bd_N"/>
</dbReference>
<dbReference type="InterPro" id="IPR022893">
    <property type="entry name" value="Shikimate_DH_fam"/>
</dbReference>
<dbReference type="InterPro" id="IPR006151">
    <property type="entry name" value="Shikm_DH/Glu-tRNA_Rdtase"/>
</dbReference>
<dbReference type="NCBIfam" id="TIGR00507">
    <property type="entry name" value="aroE"/>
    <property type="match status" value="1"/>
</dbReference>
<dbReference type="NCBIfam" id="NF001310">
    <property type="entry name" value="PRK00258.1-2"/>
    <property type="match status" value="1"/>
</dbReference>
<dbReference type="PANTHER" id="PTHR21089:SF1">
    <property type="entry name" value="BIFUNCTIONAL 3-DEHYDROQUINATE DEHYDRATASE_SHIKIMATE DEHYDROGENASE, CHLOROPLASTIC"/>
    <property type="match status" value="1"/>
</dbReference>
<dbReference type="PANTHER" id="PTHR21089">
    <property type="entry name" value="SHIKIMATE DEHYDROGENASE"/>
    <property type="match status" value="1"/>
</dbReference>
<dbReference type="Pfam" id="PF18317">
    <property type="entry name" value="SDH_C"/>
    <property type="match status" value="1"/>
</dbReference>
<dbReference type="Pfam" id="PF01488">
    <property type="entry name" value="Shikimate_DH"/>
    <property type="match status" value="1"/>
</dbReference>
<dbReference type="Pfam" id="PF08501">
    <property type="entry name" value="Shikimate_dh_N"/>
    <property type="match status" value="1"/>
</dbReference>
<dbReference type="SUPFAM" id="SSF53223">
    <property type="entry name" value="Aminoacid dehydrogenase-like, N-terminal domain"/>
    <property type="match status" value="1"/>
</dbReference>
<dbReference type="SUPFAM" id="SSF51735">
    <property type="entry name" value="NAD(P)-binding Rossmann-fold domains"/>
    <property type="match status" value="1"/>
</dbReference>